<dbReference type="EC" id="3.1.1.103" evidence="2"/>
<dbReference type="EMBL" id="AB009635">
    <property type="protein sequence ID" value="BAA24012.1"/>
    <property type="molecule type" value="Genomic_DNA"/>
</dbReference>
<dbReference type="RefSeq" id="WP_000671245.1">
    <property type="nucleotide sequence ID" value="NZ_WYDB01000003.1"/>
</dbReference>
<dbReference type="PDB" id="5ZH8">
    <property type="method" value="X-ray"/>
    <property type="resolution" value="2.60 A"/>
    <property type="chains" value="A/B=1-397"/>
</dbReference>
<dbReference type="PDBsum" id="5ZH8"/>
<dbReference type="SMR" id="O50608"/>
<dbReference type="MEROPS" id="S12.006"/>
<dbReference type="OMA" id="HAGFYKT"/>
<dbReference type="BioCyc" id="MetaCyc:MONOMER-19973"/>
<dbReference type="BRENDA" id="3.1.1.103">
    <property type="organism ID" value="3352"/>
</dbReference>
<dbReference type="GO" id="GO:0005886">
    <property type="term" value="C:plasma membrane"/>
    <property type="evidence" value="ECO:0007669"/>
    <property type="project" value="UniProtKB-SubCell"/>
</dbReference>
<dbReference type="GO" id="GO:0016787">
    <property type="term" value="F:hydrolase activity"/>
    <property type="evidence" value="ECO:0007669"/>
    <property type="project" value="UniProtKB-KW"/>
</dbReference>
<dbReference type="GO" id="GO:0001896">
    <property type="term" value="P:autolysis"/>
    <property type="evidence" value="ECO:0000314"/>
    <property type="project" value="CACAO"/>
</dbReference>
<dbReference type="GO" id="GO:0071555">
    <property type="term" value="P:cell wall organization"/>
    <property type="evidence" value="ECO:0007669"/>
    <property type="project" value="UniProtKB-KW"/>
</dbReference>
<dbReference type="GO" id="GO:1900192">
    <property type="term" value="P:positive regulation of single-species biofilm formation"/>
    <property type="evidence" value="ECO:0000314"/>
    <property type="project" value="CACAO"/>
</dbReference>
<dbReference type="GO" id="GO:0046677">
    <property type="term" value="P:response to antibiotic"/>
    <property type="evidence" value="ECO:0007669"/>
    <property type="project" value="UniProtKB-KW"/>
</dbReference>
<dbReference type="FunFam" id="3.40.710.10:FF:000040">
    <property type="entry name" value="Methicillin resistance protein FmtA"/>
    <property type="match status" value="1"/>
</dbReference>
<dbReference type="Gene3D" id="3.40.710.10">
    <property type="entry name" value="DD-peptidase/beta-lactamase superfamily"/>
    <property type="match status" value="1"/>
</dbReference>
<dbReference type="InterPro" id="IPR050491">
    <property type="entry name" value="Bact_CellWall_Synth/Modif"/>
</dbReference>
<dbReference type="InterPro" id="IPR001466">
    <property type="entry name" value="Beta-lactam-related"/>
</dbReference>
<dbReference type="InterPro" id="IPR012338">
    <property type="entry name" value="Beta-lactam/transpept-like"/>
</dbReference>
<dbReference type="PANTHER" id="PTHR46825">
    <property type="entry name" value="D-ALANYL-D-ALANINE-CARBOXYPEPTIDASE/ENDOPEPTIDASE AMPH"/>
    <property type="match status" value="1"/>
</dbReference>
<dbReference type="PANTHER" id="PTHR46825:SF11">
    <property type="entry name" value="PENICILLIN-BINDING PROTEIN 4"/>
    <property type="match status" value="1"/>
</dbReference>
<dbReference type="Pfam" id="PF00144">
    <property type="entry name" value="Beta-lactamase"/>
    <property type="match status" value="1"/>
</dbReference>
<dbReference type="SUPFAM" id="SSF56601">
    <property type="entry name" value="beta-lactamase/transpeptidase-like"/>
    <property type="match status" value="1"/>
</dbReference>
<reference key="1">
    <citation type="journal article" date="1997" name="Antimicrob. Agents Chemother.">
        <title>Cloning and characterization of the fmt gene which affects the methicillin resistance level and autolysis in the presence of triton X-100 in methicillin-resistant Staphylococcus aureus.</title>
        <authorList>
            <person name="Komatsuzawa H."/>
            <person name="Sugai M."/>
            <person name="Ohta K."/>
            <person name="Fujiwara T."/>
            <person name="Nakashima S."/>
            <person name="Suzuki J."/>
            <person name="Lee C.Y."/>
            <person name="Suginaka H."/>
        </authorList>
    </citation>
    <scope>NUCLEOTIDE SEQUENCE [GENOMIC DNA]</scope>
    <scope>FUNCTION</scope>
    <source>
        <strain>KSA8</strain>
        <strain>NCTC 10443 / 64/9204</strain>
    </source>
</reference>
<reference key="2">
    <citation type="journal article" date="1999" name="Antimicrob. Agents Chemother.">
        <title>Characterization of fmtA, a gene that modulates the expression of methicillin resistance in Staphylococcus aureus.</title>
        <authorList>
            <person name="Komatsuzawa H."/>
            <person name="Ohta K."/>
            <person name="Labischinski H."/>
            <person name="Sugai M."/>
            <person name="Suginaka H."/>
        </authorList>
    </citation>
    <scope>FUNCTION</scope>
    <source>
        <strain>KSA8</strain>
    </source>
</reference>
<feature type="signal peptide" evidence="3">
    <location>
        <begin position="1"/>
        <end position="23"/>
    </location>
</feature>
<feature type="chain" id="PRO_0000043098" description="Teichoic acid D-alanine hydrolase">
    <location>
        <begin position="24"/>
        <end position="397"/>
    </location>
</feature>
<feature type="helix" evidence="6">
    <location>
        <begin position="47"/>
        <end position="55"/>
    </location>
</feature>
<feature type="helix" evidence="6">
    <location>
        <begin position="74"/>
        <end position="85"/>
    </location>
</feature>
<feature type="strand" evidence="6">
    <location>
        <begin position="90"/>
        <end position="96"/>
    </location>
</feature>
<feature type="strand" evidence="6">
    <location>
        <begin position="99"/>
        <end position="110"/>
    </location>
</feature>
<feature type="turn" evidence="6">
    <location>
        <begin position="111"/>
        <end position="114"/>
    </location>
</feature>
<feature type="strand" evidence="6">
    <location>
        <begin position="122"/>
        <end position="124"/>
    </location>
</feature>
<feature type="helix" evidence="6">
    <location>
        <begin position="126"/>
        <end position="128"/>
    </location>
</feature>
<feature type="helix" evidence="6">
    <location>
        <begin position="129"/>
        <end position="142"/>
    </location>
</feature>
<feature type="helix" evidence="6">
    <location>
        <begin position="152"/>
        <end position="155"/>
    </location>
</feature>
<feature type="helix" evidence="6">
    <location>
        <begin position="167"/>
        <end position="171"/>
    </location>
</feature>
<feature type="helix" evidence="6">
    <location>
        <begin position="189"/>
        <end position="199"/>
    </location>
</feature>
<feature type="helix" evidence="6">
    <location>
        <begin position="203"/>
        <end position="205"/>
    </location>
</feature>
<feature type="helix" evidence="6">
    <location>
        <begin position="213"/>
        <end position="227"/>
    </location>
</feature>
<feature type="helix" evidence="6">
    <location>
        <begin position="231"/>
        <end position="238"/>
    </location>
</feature>
<feature type="turn" evidence="6">
    <location>
        <begin position="239"/>
        <end position="244"/>
    </location>
</feature>
<feature type="strand" evidence="6">
    <location>
        <begin position="247"/>
        <end position="250"/>
    </location>
</feature>
<feature type="helix" evidence="6">
    <location>
        <begin position="254"/>
        <end position="259"/>
    </location>
</feature>
<feature type="strand" evidence="6">
    <location>
        <begin position="264"/>
        <end position="273"/>
    </location>
</feature>
<feature type="helix" evidence="6">
    <location>
        <begin position="279"/>
        <end position="281"/>
    </location>
</feature>
<feature type="turn" evidence="6">
    <location>
        <begin position="283"/>
        <end position="285"/>
    </location>
</feature>
<feature type="strand" evidence="6">
    <location>
        <begin position="288"/>
        <end position="290"/>
    </location>
</feature>
<feature type="helix" evidence="6">
    <location>
        <begin position="292"/>
        <end position="303"/>
    </location>
</feature>
<feature type="strand" evidence="6">
    <location>
        <begin position="306"/>
        <end position="308"/>
    </location>
</feature>
<feature type="helix" evidence="6">
    <location>
        <begin position="310"/>
        <end position="318"/>
    </location>
</feature>
<feature type="strand" evidence="6">
    <location>
        <begin position="320"/>
        <end position="325"/>
    </location>
</feature>
<feature type="strand" evidence="6">
    <location>
        <begin position="327"/>
        <end position="330"/>
    </location>
</feature>
<feature type="strand" evidence="6">
    <location>
        <begin position="333"/>
        <end position="335"/>
    </location>
</feature>
<feature type="strand" evidence="6">
    <location>
        <begin position="340"/>
        <end position="346"/>
    </location>
</feature>
<feature type="strand" evidence="6">
    <location>
        <begin position="349"/>
        <end position="355"/>
    </location>
</feature>
<feature type="strand" evidence="6">
    <location>
        <begin position="357"/>
        <end position="367"/>
    </location>
</feature>
<feature type="helix" evidence="6">
    <location>
        <begin position="371"/>
        <end position="379"/>
    </location>
</feature>
<feature type="turn" evidence="6">
    <location>
        <begin position="380"/>
        <end position="382"/>
    </location>
</feature>
<evidence type="ECO:0000250" key="1"/>
<evidence type="ECO:0000250" key="2">
    <source>
        <dbReference type="UniProtKB" id="Q7A2T0"/>
    </source>
</evidence>
<evidence type="ECO:0000255" key="3"/>
<evidence type="ECO:0000269" key="4">
    <source>
    </source>
</evidence>
<evidence type="ECO:0000269" key="5">
    <source>
    </source>
</evidence>
<evidence type="ECO:0007829" key="6">
    <source>
        <dbReference type="PDB" id="5ZH8"/>
    </source>
</evidence>
<comment type="function">
    <text evidence="2 4 5">Catalyzes the liberation of D-alanyl moieties present on wall teichoic acid (WTA) and lipoteichoic acid (LTA) (By similarity). Affects the methicillin resistance level and autolysis in the presence of Triton X-100 as well as the cell wall structure (PubMed:10471551, PubMed:9371333).</text>
</comment>
<comment type="catalytic activity">
    <reaction evidence="2">
        <text>[(4-D-Ala)-(2-GlcNAc)-Rib-ol-P]n-[Gro-P]m-beta-D-ManNAc-(1-&gt;4)-alpha-D-GlcNAc-P-peptidoglycan + n H2O = [(2-GlcNAc)-Rib-ol-P]n-[Gro-P]m-beta-D-ManNAc-(1-&gt;4)-alpha-D-GlcNAc-P-peptidoglycan + n D-alanine.</text>
        <dbReference type="EC" id="3.1.1.103"/>
    </reaction>
</comment>
<comment type="subcellular location">
    <subcellularLocation>
        <location evidence="1">Cell membrane</location>
        <topology evidence="1">Peripheral membrane protein</topology>
    </subcellularLocation>
</comment>
<comment type="induction">
    <text>Transcription is dose dependently increased by the addition of beta-lactam antibiotics, fosfomycin, and bacitracin.</text>
</comment>
<comment type="miscellaneous">
    <text>Inactivation of fmtA results in reduction of the methicillin resistance and in a modification of the cell wall structure.</text>
</comment>
<protein>
    <recommendedName>
        <fullName>Teichoic acid D-alanine hydrolase</fullName>
        <ecNumber evidence="2">3.1.1.103</ecNumber>
    </recommendedName>
    <alternativeName>
        <fullName>Teichoic acid D-alanine esterase</fullName>
    </alternativeName>
</protein>
<gene>
    <name type="primary">fmtA</name>
    <name type="synonym">fmt</name>
</gene>
<accession>O50608</accession>
<sequence>MKFNKVKLVIHACVLLFIIISIALIFHRLQTKTHSIDPIHKETKLSDNEKYLVDRNKEKVAPSKLKEVYNSKDPKYKKIDKYLQSSLFNGSVAIYENGKLKMSKGYGYQDFEKGIKNTPNTMFLIGSAQKFSTGLLLKQLEEEHKININDPVSKYLPWFKTSKPIPLKDLMLHQSGLYKYKSSKDYKNLDQAVKAIQKRGIDPKKYKKHMYNDGNYLVLAKVIEEVTGKSYAENYYTKIGDPLKLQHTAFYDEQPFKKYLAKGYAYNSTGLSFLRPNILDQYYGAGNLYMTPTDMGKLITQIQQYKLFSPKITNPLLHEFGTKQYPDEYRYGFYAKPTLNRLNGGFFGQVFTVYYNDKYVVVLALNVKGNNEVRIKHIYNDILKQNKPYNTKGVIVQ</sequence>
<proteinExistence type="evidence at protein level"/>
<name>FMTA_STAAU</name>
<keyword id="KW-0002">3D-structure</keyword>
<keyword id="KW-0046">Antibiotic resistance</keyword>
<keyword id="KW-1003">Cell membrane</keyword>
<keyword id="KW-0961">Cell wall biogenesis/degradation</keyword>
<keyword id="KW-0378">Hydrolase</keyword>
<keyword id="KW-0472">Membrane</keyword>
<keyword id="KW-0732">Signal</keyword>
<organism>
    <name type="scientific">Staphylococcus aureus</name>
    <dbReference type="NCBI Taxonomy" id="1280"/>
    <lineage>
        <taxon>Bacteria</taxon>
        <taxon>Bacillati</taxon>
        <taxon>Bacillota</taxon>
        <taxon>Bacilli</taxon>
        <taxon>Bacillales</taxon>
        <taxon>Staphylococcaceae</taxon>
        <taxon>Staphylococcus</taxon>
    </lineage>
</organism>